<protein>
    <recommendedName>
        <fullName>Metalloprotease TIKI1</fullName>
        <ecNumber>3.4.-.-</ecNumber>
    </recommendedName>
    <alternativeName>
        <fullName>TRAB domain-containing protein 2A</fullName>
    </alternativeName>
</protein>
<gene>
    <name type="primary">TRABD2A</name>
    <name type="synonym">C2orf89</name>
    <name type="synonym">TIKI1</name>
</gene>
<reference key="1">
    <citation type="journal article" date="2012" name="Cell">
        <title>Tiki1 is required for head formation via Wnt cleavage-oxidation and inactivation.</title>
        <authorList>
            <person name="Zhang X."/>
            <person name="Abreu J.G."/>
            <person name="Yokota C."/>
            <person name="Macdonald B.T."/>
            <person name="Singh S."/>
            <person name="Coburn K.L."/>
            <person name="Cheong S.M."/>
            <person name="Zhang M.M."/>
            <person name="Ye Q.Z."/>
            <person name="Hang H.C."/>
            <person name="Steen H."/>
            <person name="He X."/>
        </authorList>
    </citation>
    <scope>NUCLEOTIDE SEQUENCE [MRNA] (ISOFORM 1)</scope>
    <scope>FUNCTION</scope>
    <scope>SUBCELLULAR LOCATION</scope>
    <scope>COFACTOR</scope>
</reference>
<reference key="2">
    <citation type="journal article" date="2004" name="Nat. Genet.">
        <title>Complete sequencing and characterization of 21,243 full-length human cDNAs.</title>
        <authorList>
            <person name="Ota T."/>
            <person name="Suzuki Y."/>
            <person name="Nishikawa T."/>
            <person name="Otsuki T."/>
            <person name="Sugiyama T."/>
            <person name="Irie R."/>
            <person name="Wakamatsu A."/>
            <person name="Hayashi K."/>
            <person name="Sato H."/>
            <person name="Nagai K."/>
            <person name="Kimura K."/>
            <person name="Makita H."/>
            <person name="Sekine M."/>
            <person name="Obayashi M."/>
            <person name="Nishi T."/>
            <person name="Shibahara T."/>
            <person name="Tanaka T."/>
            <person name="Ishii S."/>
            <person name="Yamamoto J."/>
            <person name="Saito K."/>
            <person name="Kawai Y."/>
            <person name="Isono Y."/>
            <person name="Nakamura Y."/>
            <person name="Nagahari K."/>
            <person name="Murakami K."/>
            <person name="Yasuda T."/>
            <person name="Iwayanagi T."/>
            <person name="Wagatsuma M."/>
            <person name="Shiratori A."/>
            <person name="Sudo H."/>
            <person name="Hosoiri T."/>
            <person name="Kaku Y."/>
            <person name="Kodaira H."/>
            <person name="Kondo H."/>
            <person name="Sugawara M."/>
            <person name="Takahashi M."/>
            <person name="Kanda K."/>
            <person name="Yokoi T."/>
            <person name="Furuya T."/>
            <person name="Kikkawa E."/>
            <person name="Omura Y."/>
            <person name="Abe K."/>
            <person name="Kamihara K."/>
            <person name="Katsuta N."/>
            <person name="Sato K."/>
            <person name="Tanikawa M."/>
            <person name="Yamazaki M."/>
            <person name="Ninomiya K."/>
            <person name="Ishibashi T."/>
            <person name="Yamashita H."/>
            <person name="Murakawa K."/>
            <person name="Fujimori K."/>
            <person name="Tanai H."/>
            <person name="Kimata M."/>
            <person name="Watanabe M."/>
            <person name="Hiraoka S."/>
            <person name="Chiba Y."/>
            <person name="Ishida S."/>
            <person name="Ono Y."/>
            <person name="Takiguchi S."/>
            <person name="Watanabe S."/>
            <person name="Yosida M."/>
            <person name="Hotuta T."/>
            <person name="Kusano J."/>
            <person name="Kanehori K."/>
            <person name="Takahashi-Fujii A."/>
            <person name="Hara H."/>
            <person name="Tanase T.-O."/>
            <person name="Nomura Y."/>
            <person name="Togiya S."/>
            <person name="Komai F."/>
            <person name="Hara R."/>
            <person name="Takeuchi K."/>
            <person name="Arita M."/>
            <person name="Imose N."/>
            <person name="Musashino K."/>
            <person name="Yuuki H."/>
            <person name="Oshima A."/>
            <person name="Sasaki N."/>
            <person name="Aotsuka S."/>
            <person name="Yoshikawa Y."/>
            <person name="Matsunawa H."/>
            <person name="Ichihara T."/>
            <person name="Shiohata N."/>
            <person name="Sano S."/>
            <person name="Moriya S."/>
            <person name="Momiyama H."/>
            <person name="Satoh N."/>
            <person name="Takami S."/>
            <person name="Terashima Y."/>
            <person name="Suzuki O."/>
            <person name="Nakagawa S."/>
            <person name="Senoh A."/>
            <person name="Mizoguchi H."/>
            <person name="Goto Y."/>
            <person name="Shimizu F."/>
            <person name="Wakebe H."/>
            <person name="Hishigaki H."/>
            <person name="Watanabe T."/>
            <person name="Sugiyama A."/>
            <person name="Takemoto M."/>
            <person name="Kawakami B."/>
            <person name="Yamazaki M."/>
            <person name="Watanabe K."/>
            <person name="Kumagai A."/>
            <person name="Itakura S."/>
            <person name="Fukuzumi Y."/>
            <person name="Fujimori Y."/>
            <person name="Komiyama M."/>
            <person name="Tashiro H."/>
            <person name="Tanigami A."/>
            <person name="Fujiwara T."/>
            <person name="Ono T."/>
            <person name="Yamada K."/>
            <person name="Fujii Y."/>
            <person name="Ozaki K."/>
            <person name="Hirao M."/>
            <person name="Ohmori Y."/>
            <person name="Kawabata A."/>
            <person name="Hikiji T."/>
            <person name="Kobatake N."/>
            <person name="Inagaki H."/>
            <person name="Ikema Y."/>
            <person name="Okamoto S."/>
            <person name="Okitani R."/>
            <person name="Kawakami T."/>
            <person name="Noguchi S."/>
            <person name="Itoh T."/>
            <person name="Shigeta K."/>
            <person name="Senba T."/>
            <person name="Matsumura K."/>
            <person name="Nakajima Y."/>
            <person name="Mizuno T."/>
            <person name="Morinaga M."/>
            <person name="Sasaki M."/>
            <person name="Togashi T."/>
            <person name="Oyama M."/>
            <person name="Hata H."/>
            <person name="Watanabe M."/>
            <person name="Komatsu T."/>
            <person name="Mizushima-Sugano J."/>
            <person name="Satoh T."/>
            <person name="Shirai Y."/>
            <person name="Takahashi Y."/>
            <person name="Nakagawa K."/>
            <person name="Okumura K."/>
            <person name="Nagase T."/>
            <person name="Nomura N."/>
            <person name="Kikuchi H."/>
            <person name="Masuho Y."/>
            <person name="Yamashita R."/>
            <person name="Nakai K."/>
            <person name="Yada T."/>
            <person name="Nakamura Y."/>
            <person name="Ohara O."/>
            <person name="Isogai T."/>
            <person name="Sugano S."/>
        </authorList>
    </citation>
    <scope>NUCLEOTIDE SEQUENCE [LARGE SCALE MRNA] (ISOFORM 1)</scope>
    <source>
        <tissue>Colon</tissue>
    </source>
</reference>
<reference key="3">
    <citation type="journal article" date="2005" name="Nature">
        <title>Generation and annotation of the DNA sequences of human chromosomes 2 and 4.</title>
        <authorList>
            <person name="Hillier L.W."/>
            <person name="Graves T.A."/>
            <person name="Fulton R.S."/>
            <person name="Fulton L.A."/>
            <person name="Pepin K.H."/>
            <person name="Minx P."/>
            <person name="Wagner-McPherson C."/>
            <person name="Layman D."/>
            <person name="Wylie K."/>
            <person name="Sekhon M."/>
            <person name="Becker M.C."/>
            <person name="Fewell G.A."/>
            <person name="Delehaunty K.D."/>
            <person name="Miner T.L."/>
            <person name="Nash W.E."/>
            <person name="Kremitzki C."/>
            <person name="Oddy L."/>
            <person name="Du H."/>
            <person name="Sun H."/>
            <person name="Bradshaw-Cordum H."/>
            <person name="Ali J."/>
            <person name="Carter J."/>
            <person name="Cordes M."/>
            <person name="Harris A."/>
            <person name="Isak A."/>
            <person name="van Brunt A."/>
            <person name="Nguyen C."/>
            <person name="Du F."/>
            <person name="Courtney L."/>
            <person name="Kalicki J."/>
            <person name="Ozersky P."/>
            <person name="Abbott S."/>
            <person name="Armstrong J."/>
            <person name="Belter E.A."/>
            <person name="Caruso L."/>
            <person name="Cedroni M."/>
            <person name="Cotton M."/>
            <person name="Davidson T."/>
            <person name="Desai A."/>
            <person name="Elliott G."/>
            <person name="Erb T."/>
            <person name="Fronick C."/>
            <person name="Gaige T."/>
            <person name="Haakenson W."/>
            <person name="Haglund K."/>
            <person name="Holmes A."/>
            <person name="Harkins R."/>
            <person name="Kim K."/>
            <person name="Kruchowski S.S."/>
            <person name="Strong C.M."/>
            <person name="Grewal N."/>
            <person name="Goyea E."/>
            <person name="Hou S."/>
            <person name="Levy A."/>
            <person name="Martinka S."/>
            <person name="Mead K."/>
            <person name="McLellan M.D."/>
            <person name="Meyer R."/>
            <person name="Randall-Maher J."/>
            <person name="Tomlinson C."/>
            <person name="Dauphin-Kohlberg S."/>
            <person name="Kozlowicz-Reilly A."/>
            <person name="Shah N."/>
            <person name="Swearengen-Shahid S."/>
            <person name="Snider J."/>
            <person name="Strong J.T."/>
            <person name="Thompson J."/>
            <person name="Yoakum M."/>
            <person name="Leonard S."/>
            <person name="Pearman C."/>
            <person name="Trani L."/>
            <person name="Radionenko M."/>
            <person name="Waligorski J.E."/>
            <person name="Wang C."/>
            <person name="Rock S.M."/>
            <person name="Tin-Wollam A.-M."/>
            <person name="Maupin R."/>
            <person name="Latreille P."/>
            <person name="Wendl M.C."/>
            <person name="Yang S.-P."/>
            <person name="Pohl C."/>
            <person name="Wallis J.W."/>
            <person name="Spieth J."/>
            <person name="Bieri T.A."/>
            <person name="Berkowicz N."/>
            <person name="Nelson J.O."/>
            <person name="Osborne J."/>
            <person name="Ding L."/>
            <person name="Meyer R."/>
            <person name="Sabo A."/>
            <person name="Shotland Y."/>
            <person name="Sinha P."/>
            <person name="Wohldmann P.E."/>
            <person name="Cook L.L."/>
            <person name="Hickenbotham M.T."/>
            <person name="Eldred J."/>
            <person name="Williams D."/>
            <person name="Jones T.A."/>
            <person name="She X."/>
            <person name="Ciccarelli F.D."/>
            <person name="Izaurralde E."/>
            <person name="Taylor J."/>
            <person name="Schmutz J."/>
            <person name="Myers R.M."/>
            <person name="Cox D.R."/>
            <person name="Huang X."/>
            <person name="McPherson J.D."/>
            <person name="Mardis E.R."/>
            <person name="Clifton S.W."/>
            <person name="Warren W.C."/>
            <person name="Chinwalla A.T."/>
            <person name="Eddy S.R."/>
            <person name="Marra M.A."/>
            <person name="Ovcharenko I."/>
            <person name="Furey T.S."/>
            <person name="Miller W."/>
            <person name="Eichler E.E."/>
            <person name="Bork P."/>
            <person name="Suyama M."/>
            <person name="Torrents D."/>
            <person name="Waterston R.H."/>
            <person name="Wilson R.K."/>
        </authorList>
    </citation>
    <scope>NUCLEOTIDE SEQUENCE [LARGE SCALE GENOMIC DNA]</scope>
</reference>
<reference key="4">
    <citation type="submission" date="2005-07" db="EMBL/GenBank/DDBJ databases">
        <authorList>
            <person name="Mural R.J."/>
            <person name="Istrail S."/>
            <person name="Sutton G.G."/>
            <person name="Florea L."/>
            <person name="Halpern A.L."/>
            <person name="Mobarry C.M."/>
            <person name="Lippert R."/>
            <person name="Walenz B."/>
            <person name="Shatkay H."/>
            <person name="Dew I."/>
            <person name="Miller J.R."/>
            <person name="Flanigan M.J."/>
            <person name="Edwards N.J."/>
            <person name="Bolanos R."/>
            <person name="Fasulo D."/>
            <person name="Halldorsson B.V."/>
            <person name="Hannenhalli S."/>
            <person name="Turner R."/>
            <person name="Yooseph S."/>
            <person name="Lu F."/>
            <person name="Nusskern D.R."/>
            <person name="Shue B.C."/>
            <person name="Zheng X.H."/>
            <person name="Zhong F."/>
            <person name="Delcher A.L."/>
            <person name="Huson D.H."/>
            <person name="Kravitz S.A."/>
            <person name="Mouchard L."/>
            <person name="Reinert K."/>
            <person name="Remington K.A."/>
            <person name="Clark A.G."/>
            <person name="Waterman M.S."/>
            <person name="Eichler E.E."/>
            <person name="Adams M.D."/>
            <person name="Hunkapiller M.W."/>
            <person name="Myers E.W."/>
            <person name="Venter J.C."/>
        </authorList>
    </citation>
    <scope>NUCLEOTIDE SEQUENCE [LARGE SCALE GENOMIC DNA]</scope>
</reference>
<reference key="5">
    <citation type="journal article" date="2004" name="Genome Res.">
        <title>The status, quality, and expansion of the NIH full-length cDNA project: the Mammalian Gene Collection (MGC).</title>
        <authorList>
            <consortium name="The MGC Project Team"/>
        </authorList>
    </citation>
    <scope>NUCLEOTIDE SEQUENCE [LARGE SCALE MRNA] (ISOFORM 2)</scope>
    <scope>VARIANT HIS-143</scope>
    <source>
        <tissue>Lung</tissue>
    </source>
</reference>
<keyword id="KW-0025">Alternative splicing</keyword>
<keyword id="KW-1003">Cell membrane</keyword>
<keyword id="KW-0325">Glycoprotein</keyword>
<keyword id="KW-0378">Hydrolase</keyword>
<keyword id="KW-0472">Membrane</keyword>
<keyword id="KW-0479">Metal-binding</keyword>
<keyword id="KW-0482">Metalloprotease</keyword>
<keyword id="KW-0645">Protease</keyword>
<keyword id="KW-1267">Proteomics identification</keyword>
<keyword id="KW-1185">Reference proteome</keyword>
<keyword id="KW-0732">Signal</keyword>
<keyword id="KW-0812">Transmembrane</keyword>
<keyword id="KW-1133">Transmembrane helix</keyword>
<keyword id="KW-0879">Wnt signaling pathway</keyword>
<feature type="signal peptide" evidence="1">
    <location>
        <begin position="1"/>
        <end position="19"/>
    </location>
</feature>
<feature type="chain" id="PRO_0000325807" description="Metalloprotease TIKI1">
    <location>
        <begin position="20"/>
        <end position="505"/>
    </location>
</feature>
<feature type="topological domain" description="Extracellular" evidence="1">
    <location>
        <begin position="20"/>
        <end position="477"/>
    </location>
</feature>
<feature type="transmembrane region" description="Helical" evidence="1">
    <location>
        <begin position="478"/>
        <end position="498"/>
    </location>
</feature>
<feature type="topological domain" description="Cytoplasmic" evidence="1">
    <location>
        <begin position="499"/>
        <end position="505"/>
    </location>
</feature>
<feature type="region of interest" description="Disordered" evidence="2">
    <location>
        <begin position="389"/>
        <end position="428"/>
    </location>
</feature>
<feature type="compositionally biased region" description="Basic residues" evidence="2">
    <location>
        <begin position="419"/>
        <end position="428"/>
    </location>
</feature>
<feature type="glycosylation site" description="N-linked (GlcNAc...) asparagine" evidence="1">
    <location>
        <position position="220"/>
    </location>
</feature>
<feature type="glycosylation site" description="N-linked (GlcNAc...) asparagine" evidence="1">
    <location>
        <position position="229"/>
    </location>
</feature>
<feature type="glycosylation site" description="N-linked (GlcNAc...) asparagine" evidence="1">
    <location>
        <position position="278"/>
    </location>
</feature>
<feature type="glycosylation site" description="N-linked (GlcNAc...) asparagine" evidence="1">
    <location>
        <position position="336"/>
    </location>
</feature>
<feature type="splice variant" id="VSP_038837" description="In isoform 2." evidence="5">
    <location>
        <begin position="225"/>
        <end position="273"/>
    </location>
</feature>
<feature type="sequence variant" id="VAR_039920" description="In dbSNP:rs1863772." evidence="3">
    <original>R</original>
    <variation>H</variation>
    <location>
        <position position="143"/>
    </location>
</feature>
<feature type="sequence variant" id="VAR_039921" description="In dbSNP:rs2288352.">
    <original>R</original>
    <variation>Q</variation>
    <location>
        <position position="428"/>
    </location>
</feature>
<feature type="sequence variant" id="VAR_039922" description="In dbSNP:rs1649292.">
    <original>P</original>
    <variation>L</variation>
    <location>
        <position position="430"/>
    </location>
</feature>
<feature type="sequence conflict" description="In Ref. 2; BAG59220." evidence="6" ref="2">
    <original>K</original>
    <variation>R</variation>
    <location>
        <position position="322"/>
    </location>
</feature>
<proteinExistence type="evidence at protein level"/>
<comment type="function">
    <text evidence="4">Metalloprotease that acts as a negative regulator of the Wnt signaling pathway by mediating the cleavage of the 8 N-terminal residues of a subset of Wnt proteins. Following cleavage, Wnt proteins become oxidized and form large disulfide-bond oligomers, leading to their inactivation. Able to cleave WNT3A, WNT5, but not WNT11. Required for head formation.</text>
</comment>
<comment type="cofactor">
    <cofactor evidence="4">
        <name>Mn(2+)</name>
        <dbReference type="ChEBI" id="CHEBI:29035"/>
    </cofactor>
    <cofactor evidence="4">
        <name>Co(2+)</name>
        <dbReference type="ChEBI" id="CHEBI:48828"/>
    </cofactor>
    <text evidence="4">Divalent metal cations. Mn(2+) or Co(2+).</text>
</comment>
<comment type="subcellular location">
    <subcellularLocation>
        <location evidence="4">Cell membrane</location>
        <topology evidence="4">Single-pass type I membrane protein</topology>
    </subcellularLocation>
</comment>
<comment type="alternative products">
    <event type="alternative splicing"/>
    <isoform>
        <id>Q86V40-1</id>
        <name>1</name>
        <sequence type="displayed"/>
    </isoform>
    <isoform>
        <id>Q86V40-2</id>
        <name>2</name>
        <sequence type="described" ref="VSP_038837"/>
    </isoform>
</comment>
<comment type="miscellaneous">
    <text evidence="7">Was named TIKI in reference to large-headed humanoid in Polynesian mythology.</text>
</comment>
<comment type="similarity">
    <text evidence="6">Belongs to the TIKI family.</text>
</comment>
<comment type="sequence caution" evidence="6">
    <conflict type="erroneous initiation">
        <sequence resource="EMBL-CDS" id="AAH51789"/>
    </conflict>
    <text>Extended N-terminus.</text>
</comment>
<sequence>MSPWSWFLLQTLCLLPTGAASRRGAPGTANCELKPQQSELNSFLWTIKRDPPSYFFGTIHVPYTRVWDFIPDNSKEAFLQSSIVYFELDLTDPYTISALTSCQMLPQGENLQDVLPRDIYCRLKRHLEYVKLMMPLWMTPDQRGKGLYADYLFNAIAGNWERKRPVWVMLMVNSLTEVDIKSRGVPVLDLFLAQEAERLRKQTGAVEKVEEQCHPLNGLNFSQVIFALNQTLLQQESLRAGSLQIPYTTEDLIKHYNCGDLSSVILSHDSSQVPNFINATLPPQERITAQEIDSYLRRELIYKRNERIGKRVKALLEEFPDKGFFFAFGAGHFMGNNTVLDVLRREGYEVEHAPAGRPIHKGKSKKTSTRPTLSTIFAPKVPTLEVPAPEAVSSGHSTLPPLVSRPGSADTPSEAEQRFRKKRRRSQRRPRLRQFSDLWVRLEESDIVPQLQVPVLDRHISTELRLPRRGHSHHSQMVASSACLSLWTPVFWVLVLAFQTETPLL</sequence>
<accession>Q86V40</accession>
<accession>B4DKK8</accession>
<accession>I6UMB9</accession>
<organism>
    <name type="scientific">Homo sapiens</name>
    <name type="common">Human</name>
    <dbReference type="NCBI Taxonomy" id="9606"/>
    <lineage>
        <taxon>Eukaryota</taxon>
        <taxon>Metazoa</taxon>
        <taxon>Chordata</taxon>
        <taxon>Craniata</taxon>
        <taxon>Vertebrata</taxon>
        <taxon>Euteleostomi</taxon>
        <taxon>Mammalia</taxon>
        <taxon>Eutheria</taxon>
        <taxon>Euarchontoglires</taxon>
        <taxon>Primates</taxon>
        <taxon>Haplorrhini</taxon>
        <taxon>Catarrhini</taxon>
        <taxon>Hominidae</taxon>
        <taxon>Homo</taxon>
    </lineage>
</organism>
<dbReference type="EC" id="3.4.-.-"/>
<dbReference type="EMBL" id="JQ653415">
    <property type="protein sequence ID" value="AFN02881.1"/>
    <property type="molecule type" value="mRNA"/>
</dbReference>
<dbReference type="EMBL" id="AK296608">
    <property type="protein sequence ID" value="BAG59220.1"/>
    <property type="molecule type" value="mRNA"/>
</dbReference>
<dbReference type="EMBL" id="AC010087">
    <property type="status" value="NOT_ANNOTATED_CDS"/>
    <property type="molecule type" value="Genomic_DNA"/>
</dbReference>
<dbReference type="EMBL" id="CH471053">
    <property type="protein sequence ID" value="EAW99551.1"/>
    <property type="molecule type" value="Genomic_DNA"/>
</dbReference>
<dbReference type="EMBL" id="BC051789">
    <property type="protein sequence ID" value="AAH51789.1"/>
    <property type="status" value="ALT_INIT"/>
    <property type="molecule type" value="mRNA"/>
</dbReference>
<dbReference type="CCDS" id="CCDS46349.1">
    <molecule id="Q86V40-2"/>
</dbReference>
<dbReference type="CCDS" id="CCDS62946.1">
    <molecule id="Q86V40-1"/>
</dbReference>
<dbReference type="RefSeq" id="NP_001074293.1">
    <molecule id="Q86V40-2"/>
    <property type="nucleotide sequence ID" value="NM_001080824.3"/>
</dbReference>
<dbReference type="RefSeq" id="NP_001263982.1">
    <molecule id="Q86V40-1"/>
    <property type="nucleotide sequence ID" value="NM_001277053.2"/>
</dbReference>
<dbReference type="RefSeq" id="NP_001294907.1">
    <property type="nucleotide sequence ID" value="NM_001307978.1"/>
</dbReference>
<dbReference type="BioGRID" id="126188">
    <property type="interactions" value="1"/>
</dbReference>
<dbReference type="FunCoup" id="Q86V40">
    <property type="interactions" value="136"/>
</dbReference>
<dbReference type="IntAct" id="Q86V40">
    <property type="interactions" value="1"/>
</dbReference>
<dbReference type="STRING" id="9606.ENSP00000387075"/>
<dbReference type="MEROPS" id="G04.001"/>
<dbReference type="GlyCosmos" id="Q86V40">
    <property type="glycosylation" value="4 sites, No reported glycans"/>
</dbReference>
<dbReference type="GlyGen" id="Q86V40">
    <property type="glycosylation" value="4 sites, 1 N-linked glycan (1 site)"/>
</dbReference>
<dbReference type="iPTMnet" id="Q86V40"/>
<dbReference type="PhosphoSitePlus" id="Q86V40"/>
<dbReference type="BioMuta" id="TRABD2A"/>
<dbReference type="DMDM" id="292495086"/>
<dbReference type="MassIVE" id="Q86V40"/>
<dbReference type="PaxDb" id="9606-ENSP00000387075"/>
<dbReference type="PeptideAtlas" id="Q86V40"/>
<dbReference type="ProteomicsDB" id="69961">
    <molecule id="Q86V40-1"/>
</dbReference>
<dbReference type="ProteomicsDB" id="69962">
    <molecule id="Q86V40-2"/>
</dbReference>
<dbReference type="Antibodypedia" id="56499">
    <property type="antibodies" value="60 antibodies from 12 providers"/>
</dbReference>
<dbReference type="DNASU" id="129293"/>
<dbReference type="Ensembl" id="ENST00000335459.9">
    <molecule id="Q86V40-2"/>
    <property type="protein sequence ID" value="ENSP00000335004.5"/>
    <property type="gene ID" value="ENSG00000186854.11"/>
</dbReference>
<dbReference type="Ensembl" id="ENST00000409520.7">
    <molecule id="Q86V40-1"/>
    <property type="protein sequence ID" value="ENSP00000387075.2"/>
    <property type="gene ID" value="ENSG00000186854.11"/>
</dbReference>
<dbReference type="GeneID" id="129293"/>
<dbReference type="KEGG" id="hsa:129293"/>
<dbReference type="MANE-Select" id="ENST00000409520.7">
    <property type="protein sequence ID" value="ENSP00000387075.2"/>
    <property type="RefSeq nucleotide sequence ID" value="NM_001277053.2"/>
    <property type="RefSeq protein sequence ID" value="NP_001263982.1"/>
</dbReference>
<dbReference type="UCSC" id="uc002sou.6">
    <molecule id="Q86V40-1"/>
    <property type="organism name" value="human"/>
</dbReference>
<dbReference type="AGR" id="HGNC:27013"/>
<dbReference type="CTD" id="129293"/>
<dbReference type="DisGeNET" id="129293"/>
<dbReference type="GeneCards" id="TRABD2A"/>
<dbReference type="HGNC" id="HGNC:27013">
    <property type="gene designation" value="TRABD2A"/>
</dbReference>
<dbReference type="HPA" id="ENSG00000186854">
    <property type="expression patterns" value="Group enriched (intestine, lymphoid tissue, ovary)"/>
</dbReference>
<dbReference type="MIM" id="614912">
    <property type="type" value="gene"/>
</dbReference>
<dbReference type="neXtProt" id="NX_Q86V40"/>
<dbReference type="OpenTargets" id="ENSG00000186854"/>
<dbReference type="PharmGKB" id="PA165696373"/>
<dbReference type="VEuPathDB" id="HostDB:ENSG00000186854"/>
<dbReference type="eggNOG" id="ENOG502QPR1">
    <property type="taxonomic scope" value="Eukaryota"/>
</dbReference>
<dbReference type="GeneTree" id="ENSGT00940000162805"/>
<dbReference type="HOGENOM" id="CLU_035548_1_0_1"/>
<dbReference type="InParanoid" id="Q86V40"/>
<dbReference type="OMA" id="DRYFRHE"/>
<dbReference type="OrthoDB" id="9643836at2759"/>
<dbReference type="PAN-GO" id="Q86V40">
    <property type="GO annotations" value="6 GO annotations based on evolutionary models"/>
</dbReference>
<dbReference type="PhylomeDB" id="Q86V40"/>
<dbReference type="TreeFam" id="TF313392"/>
<dbReference type="PathwayCommons" id="Q86V40"/>
<dbReference type="SignaLink" id="Q86V40"/>
<dbReference type="BioGRID-ORCS" id="129293">
    <property type="hits" value="15 hits in 1135 CRISPR screens"/>
</dbReference>
<dbReference type="ChiTaRS" id="TRABD2A">
    <property type="organism name" value="human"/>
</dbReference>
<dbReference type="GenomeRNAi" id="129293"/>
<dbReference type="Pharos" id="Q86V40">
    <property type="development level" value="Tbio"/>
</dbReference>
<dbReference type="PRO" id="PR:Q86V40"/>
<dbReference type="Proteomes" id="UP000005640">
    <property type="component" value="Chromosome 2"/>
</dbReference>
<dbReference type="RNAct" id="Q86V40">
    <property type="molecule type" value="protein"/>
</dbReference>
<dbReference type="Bgee" id="ENSG00000186854">
    <property type="expression patterns" value="Expressed in mucosa of transverse colon and 113 other cell types or tissues"/>
</dbReference>
<dbReference type="ExpressionAtlas" id="Q86V40">
    <property type="expression patterns" value="baseline and differential"/>
</dbReference>
<dbReference type="GO" id="GO:0016020">
    <property type="term" value="C:membrane"/>
    <property type="evidence" value="ECO:0000318"/>
    <property type="project" value="GO_Central"/>
</dbReference>
<dbReference type="GO" id="GO:0031090">
    <property type="term" value="C:organelle membrane"/>
    <property type="evidence" value="ECO:0000314"/>
    <property type="project" value="UniProtKB"/>
</dbReference>
<dbReference type="GO" id="GO:0005886">
    <property type="term" value="C:plasma membrane"/>
    <property type="evidence" value="ECO:0000314"/>
    <property type="project" value="UniProtKB"/>
</dbReference>
<dbReference type="GO" id="GO:0004175">
    <property type="term" value="F:endopeptidase activity"/>
    <property type="evidence" value="ECO:0000314"/>
    <property type="project" value="ParkinsonsUK-UCL"/>
</dbReference>
<dbReference type="GO" id="GO:0046872">
    <property type="term" value="F:metal ion binding"/>
    <property type="evidence" value="ECO:0007669"/>
    <property type="project" value="UniProtKB-KW"/>
</dbReference>
<dbReference type="GO" id="GO:0004222">
    <property type="term" value="F:metalloendopeptidase activity"/>
    <property type="evidence" value="ECO:0000314"/>
    <property type="project" value="UniProtKB"/>
</dbReference>
<dbReference type="GO" id="GO:0017147">
    <property type="term" value="F:Wnt-protein binding"/>
    <property type="evidence" value="ECO:0000314"/>
    <property type="project" value="UniProtKB"/>
</dbReference>
<dbReference type="GO" id="GO:0060322">
    <property type="term" value="P:head development"/>
    <property type="evidence" value="ECO:0000250"/>
    <property type="project" value="UniProtKB"/>
</dbReference>
<dbReference type="GO" id="GO:0030178">
    <property type="term" value="P:negative regulation of Wnt signaling pathway"/>
    <property type="evidence" value="ECO:0000314"/>
    <property type="project" value="UniProtKB"/>
</dbReference>
<dbReference type="GO" id="GO:0031334">
    <property type="term" value="P:positive regulation of protein-containing complex assembly"/>
    <property type="evidence" value="ECO:0000250"/>
    <property type="project" value="ParkinsonsUK-UCL"/>
</dbReference>
<dbReference type="GO" id="GO:0006508">
    <property type="term" value="P:proteolysis"/>
    <property type="evidence" value="ECO:0000314"/>
    <property type="project" value="ParkinsonsUK-UCL"/>
</dbReference>
<dbReference type="GO" id="GO:0016055">
    <property type="term" value="P:Wnt signaling pathway"/>
    <property type="evidence" value="ECO:0007669"/>
    <property type="project" value="UniProtKB-KW"/>
</dbReference>
<dbReference type="CDD" id="cd14789">
    <property type="entry name" value="Tiki"/>
    <property type="match status" value="1"/>
</dbReference>
<dbReference type="InterPro" id="IPR040230">
    <property type="entry name" value="TIKI1/2-like"/>
</dbReference>
<dbReference type="InterPro" id="IPR002816">
    <property type="entry name" value="TraB/PrgY/GumN_fam"/>
</dbReference>
<dbReference type="PANTHER" id="PTHR31120">
    <property type="entry name" value="METALLOPROTEASE TIKI"/>
    <property type="match status" value="1"/>
</dbReference>
<dbReference type="PANTHER" id="PTHR31120:SF7">
    <property type="entry name" value="METALLOPROTEASE TIKI1"/>
    <property type="match status" value="1"/>
</dbReference>
<dbReference type="Pfam" id="PF01963">
    <property type="entry name" value="TraB_PrgY_gumN"/>
    <property type="match status" value="1"/>
</dbReference>
<evidence type="ECO:0000255" key="1"/>
<evidence type="ECO:0000256" key="2">
    <source>
        <dbReference type="SAM" id="MobiDB-lite"/>
    </source>
</evidence>
<evidence type="ECO:0000269" key="3">
    <source>
    </source>
</evidence>
<evidence type="ECO:0000269" key="4">
    <source>
    </source>
</evidence>
<evidence type="ECO:0000303" key="5">
    <source>
    </source>
</evidence>
<evidence type="ECO:0000305" key="6"/>
<evidence type="ECO:0000305" key="7">
    <source>
    </source>
</evidence>
<name>TIKI1_HUMAN</name>